<accession>Q47914</accession>
<keyword id="KW-0001">2Fe-2S</keyword>
<keyword id="KW-0058">Aromatic hydrocarbons catabolism</keyword>
<keyword id="KW-0249">Electron transport</keyword>
<keyword id="KW-0285">Flavoprotein</keyword>
<keyword id="KW-0288">FMN</keyword>
<keyword id="KW-0408">Iron</keyword>
<keyword id="KW-0411">Iron-sulfur</keyword>
<keyword id="KW-0479">Metal-binding</keyword>
<keyword id="KW-0520">NAD</keyword>
<keyword id="KW-0560">Oxidoreductase</keyword>
<keyword id="KW-0813">Transport</keyword>
<gene>
    <name evidence="5" type="primary">pcpD</name>
</gene>
<feature type="chain" id="PRO_0000444444" description="Tetrachlorobenzoquinone reductase">
    <location>
        <begin position="1"/>
        <end position="324"/>
    </location>
</feature>
<feature type="domain" description="FAD-binding FR-type" evidence="2">
    <location>
        <begin position="5"/>
        <end position="107"/>
    </location>
</feature>
<feature type="domain" description="2Fe-2S ferredoxin-type" evidence="1">
    <location>
        <begin position="238"/>
        <end position="324"/>
    </location>
</feature>
<feature type="binding site" evidence="1">
    <location>
        <position position="273"/>
    </location>
    <ligand>
        <name>[2Fe-2S] cluster</name>
        <dbReference type="ChEBI" id="CHEBI:190135"/>
    </ligand>
</feature>
<feature type="binding site" evidence="1">
    <location>
        <position position="278"/>
    </location>
    <ligand>
        <name>[2Fe-2S] cluster</name>
        <dbReference type="ChEBI" id="CHEBI:190135"/>
    </ligand>
</feature>
<feature type="binding site" evidence="1">
    <location>
        <position position="281"/>
    </location>
    <ligand>
        <name>[2Fe-2S] cluster</name>
        <dbReference type="ChEBI" id="CHEBI:190135"/>
    </ligand>
</feature>
<feature type="binding site" evidence="1">
    <location>
        <position position="311"/>
    </location>
    <ligand>
        <name>[2Fe-2S] cluster</name>
        <dbReference type="ChEBI" id="CHEBI:190135"/>
    </ligand>
</feature>
<name>PCPD_SPHCR</name>
<sequence>MTNPVSTIDMTVTQITRVAKDINSYELRPEPGVILPEFTAGAHIGVSLPNGIQRSYSLVNPQGERDRYVITVNLDRNSRGGSRYLHEQLRVGQRLSIVPPANNFALVETAPHSVLFAGGIGITPIWSMIQRLRELGSTWELHYACRGKDFVAYRQELEQAAAEAGARFHLHLDEEADGKFLDLAGPVAQAGQDSIFYCCGPEAMLQAYKAATADLPSERVRFEHFGAALTGEPADDVFTVVLARRSGQEFTVEPGMTILETLLQNGISRNYSCTQGVCGTCETKVLEGEPDHRDWVLSDEKKASNSTMLICCSLSKSPRLVLDI</sequence>
<proteinExistence type="evidence at protein level"/>
<evidence type="ECO:0000255" key="1">
    <source>
        <dbReference type="PROSITE-ProRule" id="PRU00465"/>
    </source>
</evidence>
<evidence type="ECO:0000255" key="2">
    <source>
        <dbReference type="PROSITE-ProRule" id="PRU00716"/>
    </source>
</evidence>
<evidence type="ECO:0000269" key="3">
    <source>
    </source>
</evidence>
<evidence type="ECO:0000269" key="4">
    <source>
    </source>
</evidence>
<evidence type="ECO:0000303" key="5">
    <source>
    </source>
</evidence>
<evidence type="ECO:0000305" key="6"/>
<evidence type="ECO:0000305" key="7">
    <source>
    </source>
</evidence>
<evidence type="ECO:0000312" key="8">
    <source>
        <dbReference type="EMBL" id="AAA68938.2"/>
    </source>
</evidence>
<organism>
    <name type="scientific">Sphingobium chlorophenolicum</name>
    <dbReference type="NCBI Taxonomy" id="46429"/>
    <lineage>
        <taxon>Bacteria</taxon>
        <taxon>Pseudomonadati</taxon>
        <taxon>Pseudomonadota</taxon>
        <taxon>Alphaproteobacteria</taxon>
        <taxon>Sphingomonadales</taxon>
        <taxon>Sphingomonadaceae</taxon>
        <taxon>Sphingobium</taxon>
    </lineage>
</organism>
<protein>
    <recommendedName>
        <fullName evidence="5">Tetrachlorobenzoquinone reductase</fullName>
        <shortName evidence="5">TCBQ reductase</shortName>
        <ecNumber evidence="3 4">1.1.1.404</ecNumber>
    </recommendedName>
</protein>
<dbReference type="EC" id="1.1.1.404" evidence="3 4"/>
<dbReference type="EMBL" id="U12290">
    <property type="protein sequence ID" value="AAA68938.2"/>
    <property type="molecule type" value="Genomic_DNA"/>
</dbReference>
<dbReference type="SMR" id="Q47914"/>
<dbReference type="BRENDA" id="1.1.1.404">
    <property type="organism ID" value="7700"/>
</dbReference>
<dbReference type="UniPathway" id="UPA00691"/>
<dbReference type="GO" id="GO:0051537">
    <property type="term" value="F:2 iron, 2 sulfur cluster binding"/>
    <property type="evidence" value="ECO:0007669"/>
    <property type="project" value="UniProtKB-KW"/>
</dbReference>
<dbReference type="GO" id="GO:0046872">
    <property type="term" value="F:metal ion binding"/>
    <property type="evidence" value="ECO:0007669"/>
    <property type="project" value="UniProtKB-KW"/>
</dbReference>
<dbReference type="GO" id="GO:0016491">
    <property type="term" value="F:oxidoreductase activity"/>
    <property type="evidence" value="ECO:0007669"/>
    <property type="project" value="UniProtKB-KW"/>
</dbReference>
<dbReference type="GO" id="GO:0019338">
    <property type="term" value="P:pentachlorophenol catabolic process"/>
    <property type="evidence" value="ECO:0007669"/>
    <property type="project" value="UniProtKB-UniPathway"/>
</dbReference>
<dbReference type="CDD" id="cd00207">
    <property type="entry name" value="fer2"/>
    <property type="match status" value="1"/>
</dbReference>
<dbReference type="CDD" id="cd06185">
    <property type="entry name" value="PDR_like"/>
    <property type="match status" value="1"/>
</dbReference>
<dbReference type="Gene3D" id="3.10.20.30">
    <property type="match status" value="1"/>
</dbReference>
<dbReference type="Gene3D" id="3.40.50.80">
    <property type="entry name" value="Nucleotide-binding domain of ferredoxin-NADP reductase (FNR) module"/>
    <property type="match status" value="1"/>
</dbReference>
<dbReference type="Gene3D" id="2.40.30.10">
    <property type="entry name" value="Translation factors"/>
    <property type="match status" value="1"/>
</dbReference>
<dbReference type="InterPro" id="IPR036010">
    <property type="entry name" value="2Fe-2S_ferredoxin-like_sf"/>
</dbReference>
<dbReference type="InterPro" id="IPR001041">
    <property type="entry name" value="2Fe-2S_ferredoxin-type"/>
</dbReference>
<dbReference type="InterPro" id="IPR006058">
    <property type="entry name" value="2Fe2S_fd_BS"/>
</dbReference>
<dbReference type="InterPro" id="IPR012675">
    <property type="entry name" value="Beta-grasp_dom_sf"/>
</dbReference>
<dbReference type="InterPro" id="IPR017927">
    <property type="entry name" value="FAD-bd_FR_type"/>
</dbReference>
<dbReference type="InterPro" id="IPR039261">
    <property type="entry name" value="FNR_nucleotide-bd"/>
</dbReference>
<dbReference type="InterPro" id="IPR050415">
    <property type="entry name" value="MRET"/>
</dbReference>
<dbReference type="InterPro" id="IPR001433">
    <property type="entry name" value="OxRdtase_FAD/NAD-bd"/>
</dbReference>
<dbReference type="InterPro" id="IPR017938">
    <property type="entry name" value="Riboflavin_synthase-like_b-brl"/>
</dbReference>
<dbReference type="PANTHER" id="PTHR47354:SF1">
    <property type="entry name" value="CARNITINE MONOOXYGENASE REDUCTASE SUBUNIT"/>
    <property type="match status" value="1"/>
</dbReference>
<dbReference type="PANTHER" id="PTHR47354">
    <property type="entry name" value="NADH OXIDOREDUCTASE HCR"/>
    <property type="match status" value="1"/>
</dbReference>
<dbReference type="Pfam" id="PF00111">
    <property type="entry name" value="Fer2"/>
    <property type="match status" value="1"/>
</dbReference>
<dbReference type="Pfam" id="PF00175">
    <property type="entry name" value="NAD_binding_1"/>
    <property type="match status" value="1"/>
</dbReference>
<dbReference type="PRINTS" id="PR00409">
    <property type="entry name" value="PHDIOXRDTASE"/>
</dbReference>
<dbReference type="SUPFAM" id="SSF54292">
    <property type="entry name" value="2Fe-2S ferredoxin-like"/>
    <property type="match status" value="1"/>
</dbReference>
<dbReference type="SUPFAM" id="SSF52343">
    <property type="entry name" value="Ferredoxin reductase-like, C-terminal NADP-linked domain"/>
    <property type="match status" value="1"/>
</dbReference>
<dbReference type="SUPFAM" id="SSF63380">
    <property type="entry name" value="Riboflavin synthase domain-like"/>
    <property type="match status" value="1"/>
</dbReference>
<dbReference type="PROSITE" id="PS00197">
    <property type="entry name" value="2FE2S_FER_1"/>
    <property type="match status" value="1"/>
</dbReference>
<dbReference type="PROSITE" id="PS51085">
    <property type="entry name" value="2FE2S_FER_2"/>
    <property type="match status" value="1"/>
</dbReference>
<dbReference type="PROSITE" id="PS51384">
    <property type="entry name" value="FAD_FR"/>
    <property type="match status" value="1"/>
</dbReference>
<reference key="1">
    <citation type="journal article" date="1993" name="J. Bacteriol.">
        <title>Cloning, sequence analysis, and expression of the Flavobacterium pentachlorophenol-4-monooxygenase gene in Escherichia coli.</title>
        <authorList>
            <person name="Orser C.S."/>
            <person name="Lange C.C."/>
            <person name="Xun L."/>
            <person name="Zahrt T.C."/>
            <person name="Schneider B.J."/>
        </authorList>
    </citation>
    <scope>NUCLEOTIDE SEQUENCE [GENOMIC DNA] OF 1-187</scope>
    <source>
        <strain evidence="8">ATCC 39723 / DSM 6824 / L-1</strain>
    </source>
</reference>
<reference key="2">
    <citation type="journal article" date="2002" name="J. Bacteriol.">
        <title>Organization and regulation of pentachlorophenol-degrading genes in Sphingobium chlorophenolicum ATCC 39723.</title>
        <authorList>
            <person name="Cai M."/>
            <person name="Xun L."/>
        </authorList>
    </citation>
    <scope>NUCLEOTIDE SEQUENCE [GENOMIC DNA]</scope>
    <source>
        <strain evidence="8">ATCC 39723 / DSM 6824 / L-1</strain>
    </source>
</reference>
<reference key="3">
    <citation type="journal article" date="2008" name="Int. J. Mol. Sci.">
        <title>Biochemical characterization of the tetrachlorobenzoquinone reductase involved in the biodegradation of pentachlorophenol.</title>
        <authorList>
            <person name="Chen L."/>
            <person name="Yang J."/>
        </authorList>
    </citation>
    <scope>FUNCTION</scope>
    <scope>CATALYTIC ACTIVITY</scope>
    <scope>BIOPHYSICOCHEMICAL PROPERTIES</scope>
    <scope>COFACTOR</scope>
    <scope>PATHWAY</scope>
    <scope>SUBUNIT</scope>
    <scope>ACTIVITY REGULATION</scope>
    <scope>INDUCTION</scope>
    <source>
        <strain>ATCC 39723 / DSM 6824 / L-1</strain>
    </source>
</reference>
<reference key="4">
    <citation type="journal article" date="2013" name="Proc. Natl. Acad. Sci. U.S.A.">
        <title>Sequestration of a highly reactive intermediate in an evolving pathway for degradation of pentachlorophenol.</title>
        <authorList>
            <person name="Yadid I."/>
            <person name="Rudolph J."/>
            <person name="Hlouchova K."/>
            <person name="Copley S.D."/>
        </authorList>
    </citation>
    <scope>FUNCTION</scope>
    <scope>CATALYTIC ACTIVITY</scope>
    <scope>BIOPHYSICOCHEMICAL PROPERTIES</scope>
    <scope>COFACTOR</scope>
    <scope>PATHWAY</scope>
    <scope>SUBUNIT</scope>
    <scope>DISRUPTION PHENOTYPE</scope>
    <scope>SUBSTRATE SPECIFICITY</scope>
    <source>
        <strain>ATCC 39723 / DSM 6824 / L-1</strain>
    </source>
</reference>
<comment type="function">
    <text evidence="3 4">Involved in the degradation of the xenobiocide pentachlorophenol (PCP) (PubMed:19325743, PubMed:23676275). Catalyzes the reduction of tetrachlorobenzoquinone (TCBQ) to yield tetrachlorohydroquinone (TCHQ) (PubMed:19325743, PubMed:23676275). Also able to reduce 2,6-dichloroindophenol (DCIP) (PubMed:23676275).</text>
</comment>
<comment type="catalytic activity">
    <reaction evidence="3 4">
        <text>2,3,5,6-tetrachlorohydroquinone + NAD(+) + H(+) = 2,3,5,6-tetrachloro-1,4-benzoquinone + NADH</text>
        <dbReference type="Rhea" id="RHEA:51888"/>
        <dbReference type="ChEBI" id="CHEBI:15378"/>
        <dbReference type="ChEBI" id="CHEBI:36703"/>
        <dbReference type="ChEBI" id="CHEBI:57540"/>
        <dbReference type="ChEBI" id="CHEBI:57945"/>
        <dbReference type="ChEBI" id="CHEBI:57994"/>
        <dbReference type="EC" id="1.1.1.404"/>
    </reaction>
</comment>
<comment type="cofactor">
    <cofactor evidence="4 7">
        <name>FMN</name>
        <dbReference type="ChEBI" id="CHEBI:58210"/>
    </cofactor>
</comment>
<comment type="cofactor">
    <cofactor evidence="3 4">
        <name>[2Fe-2S] cluster</name>
        <dbReference type="ChEBI" id="CHEBI:190135"/>
    </cofactor>
    <text evidence="3">Binds 1 [2Fe-2S] cluster.</text>
</comment>
<comment type="activity regulation">
    <text evidence="3">In vitro, activated by tetrachlorohydroquinone (TCHQ) at low concentrations and inhibited at high concentrations (above 200 uM). However, PcpD would only be stimulated by tetrachlorohydroquinone (TCHQ) under in vivo conditions due to the toxicity of tetrachlorohydroquinone (TCHQ). Competitively inhibited by pentachlorophenol (PCP) in a concentration-dependent manner. PcpD is regulated by tetrachlorohydroquinone (TCHQ) and pentachlorophenol (PCP) using a mechanism, which maintains tetrachlorobenzoquinone at a level that would neither significantly decrease the biodegradation of pentachlorophenol (PCP) nor cause cytotoxicity in cells.</text>
</comment>
<comment type="biophysicochemical properties">
    <kinetics>
        <KM evidence="4">1.21 uM for NADPH (with 90 uM cytochrome c)</KM>
        <KM evidence="4">11.5 uM for NADH (with 90 uM cytochrome c)</KM>
        <KM evidence="4">17.6 uM for cytochrome c (with 100 uM NADH)</KM>
        <KM evidence="4">38.3 uM for 2,6-dichloroindophenol (DCIP) (with 100 uM NADH)</KM>
        <text evidence="4">kcat is 20.1 sec(-1) for NADH as substrate (with 90 uM cytochrome c). kcat is 14.1 sec(-1) for 2,6-dichloroindophenol (DCIP) as substrate (with 100 uM NADH). kcat is 9.1 sec(-1) for cytochrome c as substrate (with 100 uM NADH). kcat is 3.7 sec(-1) for NADPH as substrate (with 90 uM cytochrome c).</text>
    </kinetics>
    <phDependence>
        <text evidence="3">Optimum pH is 7. It maintains more than 70% of its optimal activity even at pH 5.0. PcpD loses its activity quickly in basic solutions, retaining less than 20% of its optimal activity at pH 8.0.</text>
    </phDependence>
</comment>
<comment type="pathway">
    <text evidence="4 7">Xenobiotic degradation; pentachlorophenol degradation.</text>
</comment>
<comment type="subunit">
    <text evidence="3 4">Homotrimer.</text>
</comment>
<comment type="induction">
    <text evidence="3">Constitutively expressed.</text>
</comment>
<comment type="disruption phenotype">
    <text evidence="4">Cells lacking this gene show a significant sensitivity to pentachlorophenol (PCP) and 2,4,6-trichlorophenol (TriCP).</text>
</comment>
<comment type="similarity">
    <text evidence="6">Belongs to the PDR/VanB family.</text>
</comment>